<feature type="chain" id="PRO_1000121928" description="Glutamate-1-semialdehyde 2,1-aminomutase">
    <location>
        <begin position="1"/>
        <end position="427"/>
    </location>
</feature>
<feature type="modified residue" description="N6-(pyridoxal phosphate)lysine" evidence="1">
    <location>
        <position position="267"/>
    </location>
</feature>
<evidence type="ECO:0000255" key="1">
    <source>
        <dbReference type="HAMAP-Rule" id="MF_00375"/>
    </source>
</evidence>
<organism>
    <name type="scientific">Thermodesulfovibrio yellowstonii (strain ATCC 51303 / DSM 11347 / YP87)</name>
    <dbReference type="NCBI Taxonomy" id="289376"/>
    <lineage>
        <taxon>Bacteria</taxon>
        <taxon>Pseudomonadati</taxon>
        <taxon>Nitrospirota</taxon>
        <taxon>Thermodesulfovibrionia</taxon>
        <taxon>Thermodesulfovibrionales</taxon>
        <taxon>Thermodesulfovibrionaceae</taxon>
        <taxon>Thermodesulfovibrio</taxon>
    </lineage>
</organism>
<dbReference type="EC" id="5.4.3.8" evidence="1"/>
<dbReference type="EMBL" id="CP001147">
    <property type="protein sequence ID" value="ACI20727.1"/>
    <property type="molecule type" value="Genomic_DNA"/>
</dbReference>
<dbReference type="RefSeq" id="WP_012545461.1">
    <property type="nucleotide sequence ID" value="NC_011296.1"/>
</dbReference>
<dbReference type="RefSeq" id="YP_002247998.1">
    <property type="nucleotide sequence ID" value="NC_011296.1"/>
</dbReference>
<dbReference type="SMR" id="B5YHH6"/>
<dbReference type="FunCoup" id="B5YHH6">
    <property type="interactions" value="493"/>
</dbReference>
<dbReference type="STRING" id="289376.THEYE_A0147"/>
<dbReference type="EnsemblBacteria" id="ACI20727">
    <property type="protein sequence ID" value="ACI20727"/>
    <property type="gene ID" value="THEYE_A0147"/>
</dbReference>
<dbReference type="KEGG" id="tye:THEYE_A0147"/>
<dbReference type="PATRIC" id="fig|289376.4.peg.144"/>
<dbReference type="eggNOG" id="COG0001">
    <property type="taxonomic scope" value="Bacteria"/>
</dbReference>
<dbReference type="HOGENOM" id="CLU_016922_1_5_0"/>
<dbReference type="InParanoid" id="B5YHH6"/>
<dbReference type="OrthoDB" id="9801052at2"/>
<dbReference type="UniPathway" id="UPA00251">
    <property type="reaction ID" value="UER00317"/>
</dbReference>
<dbReference type="Proteomes" id="UP000000718">
    <property type="component" value="Chromosome"/>
</dbReference>
<dbReference type="GO" id="GO:0005737">
    <property type="term" value="C:cytoplasm"/>
    <property type="evidence" value="ECO:0007669"/>
    <property type="project" value="UniProtKB-SubCell"/>
</dbReference>
<dbReference type="GO" id="GO:0042286">
    <property type="term" value="F:glutamate-1-semialdehyde 2,1-aminomutase activity"/>
    <property type="evidence" value="ECO:0007669"/>
    <property type="project" value="UniProtKB-UniRule"/>
</dbReference>
<dbReference type="GO" id="GO:0030170">
    <property type="term" value="F:pyridoxal phosphate binding"/>
    <property type="evidence" value="ECO:0007669"/>
    <property type="project" value="InterPro"/>
</dbReference>
<dbReference type="GO" id="GO:0008483">
    <property type="term" value="F:transaminase activity"/>
    <property type="evidence" value="ECO:0007669"/>
    <property type="project" value="InterPro"/>
</dbReference>
<dbReference type="GO" id="GO:0006782">
    <property type="term" value="P:protoporphyrinogen IX biosynthetic process"/>
    <property type="evidence" value="ECO:0007669"/>
    <property type="project" value="UniProtKB-UniRule"/>
</dbReference>
<dbReference type="CDD" id="cd00610">
    <property type="entry name" value="OAT_like"/>
    <property type="match status" value="1"/>
</dbReference>
<dbReference type="FunFam" id="3.40.640.10:FF:000021">
    <property type="entry name" value="Glutamate-1-semialdehyde 2,1-aminomutase"/>
    <property type="match status" value="1"/>
</dbReference>
<dbReference type="Gene3D" id="3.90.1150.10">
    <property type="entry name" value="Aspartate Aminotransferase, domain 1"/>
    <property type="match status" value="1"/>
</dbReference>
<dbReference type="Gene3D" id="3.40.640.10">
    <property type="entry name" value="Type I PLP-dependent aspartate aminotransferase-like (Major domain)"/>
    <property type="match status" value="1"/>
</dbReference>
<dbReference type="HAMAP" id="MF_00375">
    <property type="entry name" value="HemL_aminotrans_3"/>
    <property type="match status" value="1"/>
</dbReference>
<dbReference type="InterPro" id="IPR004639">
    <property type="entry name" value="4pyrrol_synth_GluAld_NH2Trfase"/>
</dbReference>
<dbReference type="InterPro" id="IPR005814">
    <property type="entry name" value="Aminotrans_3"/>
</dbReference>
<dbReference type="InterPro" id="IPR049704">
    <property type="entry name" value="Aminotrans_3_PPA_site"/>
</dbReference>
<dbReference type="InterPro" id="IPR015424">
    <property type="entry name" value="PyrdxlP-dep_Trfase"/>
</dbReference>
<dbReference type="InterPro" id="IPR015421">
    <property type="entry name" value="PyrdxlP-dep_Trfase_major"/>
</dbReference>
<dbReference type="InterPro" id="IPR015422">
    <property type="entry name" value="PyrdxlP-dep_Trfase_small"/>
</dbReference>
<dbReference type="NCBIfam" id="TIGR00713">
    <property type="entry name" value="hemL"/>
    <property type="match status" value="1"/>
</dbReference>
<dbReference type="NCBIfam" id="NF000818">
    <property type="entry name" value="PRK00062.1"/>
    <property type="match status" value="1"/>
</dbReference>
<dbReference type="PANTHER" id="PTHR43713">
    <property type="entry name" value="GLUTAMATE-1-SEMIALDEHYDE 2,1-AMINOMUTASE"/>
    <property type="match status" value="1"/>
</dbReference>
<dbReference type="PANTHER" id="PTHR43713:SF3">
    <property type="entry name" value="GLUTAMATE-1-SEMIALDEHYDE 2,1-AMINOMUTASE 1, CHLOROPLASTIC-RELATED"/>
    <property type="match status" value="1"/>
</dbReference>
<dbReference type="Pfam" id="PF00202">
    <property type="entry name" value="Aminotran_3"/>
    <property type="match status" value="1"/>
</dbReference>
<dbReference type="SUPFAM" id="SSF53383">
    <property type="entry name" value="PLP-dependent transferases"/>
    <property type="match status" value="1"/>
</dbReference>
<dbReference type="PROSITE" id="PS00600">
    <property type="entry name" value="AA_TRANSFER_CLASS_3"/>
    <property type="match status" value="1"/>
</dbReference>
<keyword id="KW-0963">Cytoplasm</keyword>
<keyword id="KW-0413">Isomerase</keyword>
<keyword id="KW-0627">Porphyrin biosynthesis</keyword>
<keyword id="KW-0663">Pyridoxal phosphate</keyword>
<keyword id="KW-1185">Reference proteome</keyword>
<proteinExistence type="inferred from homology"/>
<accession>B5YHH6</accession>
<comment type="catalytic activity">
    <reaction evidence="1">
        <text>(S)-4-amino-5-oxopentanoate = 5-aminolevulinate</text>
        <dbReference type="Rhea" id="RHEA:14265"/>
        <dbReference type="ChEBI" id="CHEBI:57501"/>
        <dbReference type="ChEBI" id="CHEBI:356416"/>
        <dbReference type="EC" id="5.4.3.8"/>
    </reaction>
</comment>
<comment type="cofactor">
    <cofactor evidence="1">
        <name>pyridoxal 5'-phosphate</name>
        <dbReference type="ChEBI" id="CHEBI:597326"/>
    </cofactor>
</comment>
<comment type="pathway">
    <text evidence="1">Porphyrin-containing compound metabolism; protoporphyrin-IX biosynthesis; 5-aminolevulinate from L-glutamyl-tRNA(Glu): step 2/2.</text>
</comment>
<comment type="subunit">
    <text evidence="1">Homodimer.</text>
</comment>
<comment type="subcellular location">
    <subcellularLocation>
        <location evidence="1">Cytoplasm</location>
    </subcellularLocation>
</comment>
<comment type="similarity">
    <text evidence="1">Belongs to the class-III pyridoxal-phosphate-dependent aminotransferase family. HemL subfamily.</text>
</comment>
<reference key="1">
    <citation type="submission" date="2008-08" db="EMBL/GenBank/DDBJ databases">
        <title>The complete genome sequence of Thermodesulfovibrio yellowstonii strain ATCC 51303 / DSM 11347 / YP87.</title>
        <authorList>
            <person name="Dodson R.J."/>
            <person name="Durkin A.S."/>
            <person name="Wu M."/>
            <person name="Eisen J."/>
            <person name="Sutton G."/>
        </authorList>
    </citation>
    <scope>NUCLEOTIDE SEQUENCE [LARGE SCALE GENOMIC DNA]</scope>
    <source>
        <strain>ATCC 51303 / DSM 11347 / YP87</strain>
    </source>
</reference>
<protein>
    <recommendedName>
        <fullName evidence="1">Glutamate-1-semialdehyde 2,1-aminomutase</fullName>
        <shortName evidence="1">GSA</shortName>
        <ecNumber evidence="1">5.4.3.8</ecNumber>
    </recommendedName>
    <alternativeName>
        <fullName evidence="1">Glutamate-1-semialdehyde aminotransferase</fullName>
        <shortName evidence="1">GSA-AT</shortName>
    </alternativeName>
</protein>
<gene>
    <name evidence="1" type="primary">hemL</name>
    <name type="ordered locus">THEYE_A0147</name>
</gene>
<name>GSA_THEYD</name>
<sequence>MKTTKSKKLYKQALKLMPGGVNSPVRAFKAVGGNPLFIAKAKGSKIYDVDGNEYIDYVLSWGPLILGHAYPSVVKALKKAIEKGTSYGAPTELEIKLATLVKKAFPSIEKLRFVNSGTEATMSAIRVARGFTKRNKVIKFEGCYHGHVDGLLVSAGSGGATFSIPDSLGVPQSYTSETIVLPFNDINTFKNTLKEHWKDIACVIVEPVVGNMGCILPKDEFLKVLRNETQKYGIVLIFDEVMTGFRVSFGGAQQYYGVKPDLTCLGKVIGGGLPVGAYGGKKEIMALVAPDGGVYQAGTLSGNPIAMTAGIETLKVLSKASVYKRLEKTMQYLEEGLKDSAKQAGINVKFYRAGTMFCTYFTENEVIDAKTAKTSDTEKFKQFFLGMLQKGVYIAPSQFEAGFISLAHSEKDIEKTVQAAYKIFKKL</sequence>